<reference key="1">
    <citation type="journal article" date="1993" name="J. Bacteriol.">
        <title>Cloning and molecular analysis of genes affecting expression of binding substance, the recipient-encoded receptor(s) mediating mating aggregate formation in Enterococcus faecalis.</title>
        <authorList>
            <person name="Bensing B.A."/>
            <person name="Dunny G.M."/>
        </authorList>
    </citation>
    <scope>NUCLEOTIDE SEQUENCE [GENOMIC DNA]</scope>
    <source>
        <strain>OG1SSP</strain>
    </source>
</reference>
<reference key="2">
    <citation type="journal article" date="2003" name="Science">
        <title>Role of mobile DNA in the evolution of vancomycin-resistant Enterococcus faecalis.</title>
        <authorList>
            <person name="Paulsen I.T."/>
            <person name="Banerjei L."/>
            <person name="Myers G.S.A."/>
            <person name="Nelson K.E."/>
            <person name="Seshadri R."/>
            <person name="Read T.D."/>
            <person name="Fouts D.E."/>
            <person name="Eisen J.A."/>
            <person name="Gill S.R."/>
            <person name="Heidelberg J.F."/>
            <person name="Tettelin H."/>
            <person name="Dodson R.J."/>
            <person name="Umayam L.A."/>
            <person name="Brinkac L.M."/>
            <person name="Beanan M.J."/>
            <person name="Daugherty S.C."/>
            <person name="DeBoy R.T."/>
            <person name="Durkin S.A."/>
            <person name="Kolonay J.F."/>
            <person name="Madupu R."/>
            <person name="Nelson W.C."/>
            <person name="Vamathevan J.J."/>
            <person name="Tran B."/>
            <person name="Upton J."/>
            <person name="Hansen T."/>
            <person name="Shetty J."/>
            <person name="Khouri H.M."/>
            <person name="Utterback T.R."/>
            <person name="Radune D."/>
            <person name="Ketchum K.A."/>
            <person name="Dougherty B.A."/>
            <person name="Fraser C.M."/>
        </authorList>
    </citation>
    <scope>NUCLEOTIDE SEQUENCE [LARGE SCALE GENOMIC DNA]</scope>
    <source>
        <strain>ATCC 700802 / V583</strain>
    </source>
</reference>
<reference key="3">
    <citation type="journal article" date="2014" name="PLoS ONE">
        <title>Identification of polyketide inhibitors targeting 3-dehydroquinate dehydratase in the shikimate pathway of Enterococcus faecalis.</title>
        <authorList>
            <person name="Cheung V.W."/>
            <person name="Xue B."/>
            <person name="Hernandez-Valladares M."/>
            <person name="Go M.K."/>
            <person name="Tung A."/>
            <person name="Aguda A.H."/>
            <person name="Robinson R.C."/>
            <person name="Yew W.S."/>
        </authorList>
    </citation>
    <scope>X-RAY CRYSTALLOGRAPHY (2.20 ANGSTROMS)</scope>
    <scope>FUNCTION</scope>
    <scope>CATALYTIC ACTIVITY</scope>
    <scope>BIOPHYSICOCHEMICAL PROPERTIES</scope>
    <scope>ACTIVITY REGULATION</scope>
    <scope>SUBUNIT</scope>
    <source>
        <strain>ATCC 700802 / V583</strain>
    </source>
</reference>
<name>AROD_ENTFA</name>
<organism>
    <name type="scientific">Enterococcus faecalis (strain ATCC 700802 / V583)</name>
    <dbReference type="NCBI Taxonomy" id="226185"/>
    <lineage>
        <taxon>Bacteria</taxon>
        <taxon>Bacillati</taxon>
        <taxon>Bacillota</taxon>
        <taxon>Bacilli</taxon>
        <taxon>Lactobacillales</taxon>
        <taxon>Enterococcaceae</taxon>
        <taxon>Enterococcus</taxon>
    </lineage>
</organism>
<comment type="function">
    <text evidence="2">Involved in the third step of the chorismate pathway, which leads to the biosynthesis of aromatic amino acids (AroAA). Catalyzes the cis-dehydration of 3-dehydroquinate (DHQ) and introduces the first double bond of the aromatic ring to yield 3-dehydroshikimate. The reaction involves the formation of an imine intermediate between the keto group of 3-dehydroquinate and the epsilon-amino group of Lys-170 at the active site.</text>
</comment>
<comment type="catalytic activity">
    <reaction evidence="1 2">
        <text>3-dehydroquinate = 3-dehydroshikimate + H2O</text>
        <dbReference type="Rhea" id="RHEA:21096"/>
        <dbReference type="ChEBI" id="CHEBI:15377"/>
        <dbReference type="ChEBI" id="CHEBI:16630"/>
        <dbReference type="ChEBI" id="CHEBI:32364"/>
        <dbReference type="EC" id="4.2.1.10"/>
    </reaction>
</comment>
<comment type="activity regulation">
    <text evidence="2">Inhibited by flavonoids such as datiscetin, naringenin, marein and phloretin.</text>
</comment>
<comment type="biophysicochemical properties">
    <kinetics>
        <KM evidence="2">65 uM for 3-dehydroquinate (at pH 7.5 and 25 degrees Celsius)</KM>
        <text evidence="2">kcat is 110 sec(-1) for dehydratase activity with 3-dehydroquinate (at pH 7.5 and 25 degrees Celsius).</text>
    </kinetics>
</comment>
<comment type="pathway">
    <text evidence="1">Metabolic intermediate biosynthesis; chorismate biosynthesis; chorismate from D-erythrose 4-phosphate and phosphoenolpyruvate: step 3/7.</text>
</comment>
<comment type="subunit">
    <text evidence="1 2">Homodimer.</text>
</comment>
<comment type="similarity">
    <text evidence="1">Belongs to the type-I 3-dehydroquinase family.</text>
</comment>
<feature type="chain" id="PRO_0000138843" description="3-dehydroquinate dehydratase">
    <location>
        <begin position="1"/>
        <end position="253"/>
    </location>
</feature>
<feature type="active site" description="Proton donor/acceptor" evidence="1">
    <location>
        <position position="143"/>
    </location>
</feature>
<feature type="active site" description="Schiff-base intermediate with substrate" evidence="1">
    <location>
        <position position="170"/>
    </location>
</feature>
<feature type="binding site" evidence="1">
    <location>
        <begin position="46"/>
        <end position="48"/>
    </location>
    <ligand>
        <name>3-dehydroquinate</name>
        <dbReference type="ChEBI" id="CHEBI:32364"/>
    </ligand>
</feature>
<feature type="binding site" evidence="1">
    <location>
        <position position="82"/>
    </location>
    <ligand>
        <name>3-dehydroquinate</name>
        <dbReference type="ChEBI" id="CHEBI:32364"/>
    </ligand>
</feature>
<feature type="binding site" evidence="1">
    <location>
        <position position="213"/>
    </location>
    <ligand>
        <name>3-dehydroquinate</name>
        <dbReference type="ChEBI" id="CHEBI:32364"/>
    </ligand>
</feature>
<feature type="binding site" evidence="1">
    <location>
        <position position="232"/>
    </location>
    <ligand>
        <name>3-dehydroquinate</name>
        <dbReference type="ChEBI" id="CHEBI:32364"/>
    </ligand>
</feature>
<feature type="binding site" evidence="1">
    <location>
        <position position="236"/>
    </location>
    <ligand>
        <name>3-dehydroquinate</name>
        <dbReference type="ChEBI" id="CHEBI:32364"/>
    </ligand>
</feature>
<feature type="strand" evidence="4">
    <location>
        <begin position="4"/>
        <end position="6"/>
    </location>
</feature>
<feature type="strand" evidence="4">
    <location>
        <begin position="9"/>
        <end position="11"/>
    </location>
</feature>
<feature type="strand" evidence="4">
    <location>
        <begin position="13"/>
        <end position="15"/>
    </location>
</feature>
<feature type="strand" evidence="4">
    <location>
        <begin position="17"/>
        <end position="22"/>
    </location>
</feature>
<feature type="helix" evidence="4">
    <location>
        <begin position="27"/>
        <end position="37"/>
    </location>
</feature>
<feature type="strand" evidence="4">
    <location>
        <begin position="43"/>
        <end position="48"/>
    </location>
</feature>
<feature type="helix" evidence="4">
    <location>
        <begin position="49"/>
        <end position="51"/>
    </location>
</feature>
<feature type="turn" evidence="4">
    <location>
        <begin position="53"/>
        <end position="56"/>
    </location>
</feature>
<feature type="helix" evidence="4">
    <location>
        <begin position="58"/>
        <end position="70"/>
    </location>
</feature>
<feature type="strand" evidence="4">
    <location>
        <begin position="77"/>
        <end position="80"/>
    </location>
</feature>
<feature type="helix" evidence="4">
    <location>
        <begin position="84"/>
        <end position="86"/>
    </location>
</feature>
<feature type="helix" evidence="4">
    <location>
        <begin position="94"/>
        <end position="107"/>
    </location>
</feature>
<feature type="strand" evidence="4">
    <location>
        <begin position="111"/>
        <end position="116"/>
    </location>
</feature>
<feature type="helix" evidence="4">
    <location>
        <begin position="121"/>
        <end position="133"/>
    </location>
</feature>
<feature type="strand" evidence="4">
    <location>
        <begin position="137"/>
        <end position="146"/>
    </location>
</feature>
<feature type="helix" evidence="4">
    <location>
        <begin position="151"/>
        <end position="163"/>
    </location>
</feature>
<feature type="strand" evidence="4">
    <location>
        <begin position="167"/>
        <end position="173"/>
    </location>
</feature>
<feature type="helix" evidence="4">
    <location>
        <begin position="178"/>
        <end position="194"/>
    </location>
</feature>
<feature type="strand" evidence="4">
    <location>
        <begin position="200"/>
        <end position="204"/>
    </location>
</feature>
<feature type="turn" evidence="4">
    <location>
        <begin position="206"/>
        <end position="209"/>
    </location>
</feature>
<feature type="helix" evidence="4">
    <location>
        <begin position="210"/>
        <end position="213"/>
    </location>
</feature>
<feature type="helix" evidence="4">
    <location>
        <begin position="216"/>
        <end position="219"/>
    </location>
</feature>
<feature type="strand" evidence="4">
    <location>
        <begin position="223"/>
        <end position="225"/>
    </location>
</feature>
<feature type="helix" evidence="4">
    <location>
        <begin position="239"/>
        <end position="248"/>
    </location>
</feature>
<proteinExistence type="evidence at protein level"/>
<evidence type="ECO:0000255" key="1">
    <source>
        <dbReference type="HAMAP-Rule" id="MF_00214"/>
    </source>
</evidence>
<evidence type="ECO:0000269" key="2">
    <source>
    </source>
</evidence>
<evidence type="ECO:0000303" key="3">
    <source>
    </source>
</evidence>
<evidence type="ECO:0007829" key="4">
    <source>
        <dbReference type="PDB" id="4PH6"/>
    </source>
</evidence>
<keyword id="KW-0002">3D-structure</keyword>
<keyword id="KW-0028">Amino-acid biosynthesis</keyword>
<keyword id="KW-0057">Aromatic amino acid biosynthesis</keyword>
<keyword id="KW-0456">Lyase</keyword>
<keyword id="KW-1185">Reference proteome</keyword>
<keyword id="KW-0704">Schiff base</keyword>
<protein>
    <recommendedName>
        <fullName evidence="1 3">3-dehydroquinate dehydratase</fullName>
        <shortName evidence="1 3">3-dehydroquinase</shortName>
        <ecNumber evidence="1 2">4.2.1.10</ecNumber>
    </recommendedName>
    <alternativeName>
        <fullName evidence="1 3">Type I DHQase</fullName>
    </alternativeName>
    <alternativeName>
        <fullName evidence="1">Type I dehydroquinase</fullName>
        <shortName evidence="1">DHQ1</shortName>
    </alternativeName>
</protein>
<dbReference type="EC" id="4.2.1.10" evidence="1 2"/>
<dbReference type="EMBL" id="L23802">
    <property type="protein sequence ID" value="AAC36854.1"/>
    <property type="molecule type" value="Unassigned_DNA"/>
</dbReference>
<dbReference type="EMBL" id="AE016830">
    <property type="protein sequence ID" value="AAO81505.1"/>
    <property type="molecule type" value="Genomic_DNA"/>
</dbReference>
<dbReference type="PIR" id="D49939">
    <property type="entry name" value="D49939"/>
</dbReference>
<dbReference type="RefSeq" id="NP_815435.1">
    <property type="nucleotide sequence ID" value="NC_004668.1"/>
</dbReference>
<dbReference type="RefSeq" id="WP_002357400.1">
    <property type="nucleotide sequence ID" value="NZ_KE136528.1"/>
</dbReference>
<dbReference type="PDB" id="4PH6">
    <property type="method" value="X-ray"/>
    <property type="resolution" value="2.20 A"/>
    <property type="chains" value="A/B=1-253"/>
</dbReference>
<dbReference type="PDBsum" id="4PH6"/>
<dbReference type="SMR" id="P36923"/>
<dbReference type="STRING" id="226185.EF_1731"/>
<dbReference type="EnsemblBacteria" id="AAO81505">
    <property type="protein sequence ID" value="AAO81505"/>
    <property type="gene ID" value="EF_1731"/>
</dbReference>
<dbReference type="GeneID" id="60894026"/>
<dbReference type="KEGG" id="efa:EF1731"/>
<dbReference type="PATRIC" id="fig|226185.9.peg.1628"/>
<dbReference type="eggNOG" id="COG0710">
    <property type="taxonomic scope" value="Bacteria"/>
</dbReference>
<dbReference type="HOGENOM" id="CLU_064444_0_0_9"/>
<dbReference type="BRENDA" id="4.2.1.10">
    <property type="organism ID" value="2095"/>
</dbReference>
<dbReference type="UniPathway" id="UPA00053">
    <property type="reaction ID" value="UER00086"/>
</dbReference>
<dbReference type="EvolutionaryTrace" id="P36923"/>
<dbReference type="Proteomes" id="UP000001415">
    <property type="component" value="Chromosome"/>
</dbReference>
<dbReference type="GO" id="GO:0003855">
    <property type="term" value="F:3-dehydroquinate dehydratase activity"/>
    <property type="evidence" value="ECO:0000314"/>
    <property type="project" value="UniProtKB"/>
</dbReference>
<dbReference type="GO" id="GO:0046279">
    <property type="term" value="P:3,4-dihydroxybenzoate biosynthetic process"/>
    <property type="evidence" value="ECO:0000314"/>
    <property type="project" value="UniProtKB"/>
</dbReference>
<dbReference type="GO" id="GO:0008652">
    <property type="term" value="P:amino acid biosynthetic process"/>
    <property type="evidence" value="ECO:0007669"/>
    <property type="project" value="UniProtKB-KW"/>
</dbReference>
<dbReference type="GO" id="GO:0009073">
    <property type="term" value="P:aromatic amino acid family biosynthetic process"/>
    <property type="evidence" value="ECO:0007669"/>
    <property type="project" value="UniProtKB-KW"/>
</dbReference>
<dbReference type="GO" id="GO:0009423">
    <property type="term" value="P:chorismate biosynthetic process"/>
    <property type="evidence" value="ECO:0007669"/>
    <property type="project" value="UniProtKB-UniRule"/>
</dbReference>
<dbReference type="CDD" id="cd00502">
    <property type="entry name" value="DHQase_I"/>
    <property type="match status" value="1"/>
</dbReference>
<dbReference type="FunFam" id="3.20.20.70:FF:000047">
    <property type="entry name" value="3-dehydroquinate dehydratase"/>
    <property type="match status" value="1"/>
</dbReference>
<dbReference type="Gene3D" id="3.20.20.70">
    <property type="entry name" value="Aldolase class I"/>
    <property type="match status" value="1"/>
</dbReference>
<dbReference type="HAMAP" id="MF_00214">
    <property type="entry name" value="AroD"/>
    <property type="match status" value="1"/>
</dbReference>
<dbReference type="InterPro" id="IPR018508">
    <property type="entry name" value="3-dehydroquinate_DH_AS"/>
</dbReference>
<dbReference type="InterPro" id="IPR013785">
    <property type="entry name" value="Aldolase_TIM"/>
</dbReference>
<dbReference type="InterPro" id="IPR001381">
    <property type="entry name" value="DHquinase_I"/>
</dbReference>
<dbReference type="InterPro" id="IPR050146">
    <property type="entry name" value="Type-I_3-dehydroquinase"/>
</dbReference>
<dbReference type="NCBIfam" id="TIGR01093">
    <property type="entry name" value="aroD"/>
    <property type="match status" value="1"/>
</dbReference>
<dbReference type="PANTHER" id="PTHR43699">
    <property type="entry name" value="3-DEHYDROQUINATE DEHYDRATASE"/>
    <property type="match status" value="1"/>
</dbReference>
<dbReference type="PANTHER" id="PTHR43699:SF1">
    <property type="entry name" value="3-DEHYDROQUINATE DEHYDRATASE"/>
    <property type="match status" value="1"/>
</dbReference>
<dbReference type="Pfam" id="PF01487">
    <property type="entry name" value="DHquinase_I"/>
    <property type="match status" value="1"/>
</dbReference>
<dbReference type="SUPFAM" id="SSF51569">
    <property type="entry name" value="Aldolase"/>
    <property type="match status" value="1"/>
</dbReference>
<dbReference type="PROSITE" id="PS01028">
    <property type="entry name" value="DEHYDROQUINASE_I"/>
    <property type="match status" value="1"/>
</dbReference>
<sequence length="253" mass="28085">MKPVIVKNVRIGEGNPKIVVPIVAPTAEDILAEATASQTLDCDLVEWRLDYYENVADFSDVCNLSQQVMERLGQKPLLLTFRTQKEGGEMAFSEENYFALYHELVKKGALDLLDIELFANPLAADTLIHEAKKAGIKIVLCNHDFQKTPSQEEIVARLRQMQMRQADICKIAVMPQDATDVLTLLSATNEMYTHYASVPIVTMSMGQLGMISRVTGQLFGSALTFGSAQQASAPGQLSVQVLRNYLKTFEQNK</sequence>
<gene>
    <name evidence="1" type="primary">aroD</name>
    <name type="synonym">ebsD</name>
    <name type="ordered locus">EF_1731</name>
</gene>
<accession>P36923</accession>